<comment type="function">
    <text evidence="1">Molecular chaperone that promotes the maturation, structural maintenance and proper regulation of specific target proteins involved for instance in cell cycle control and signal transduction. Undergoes a functional cycle that is linked to its ATPase activity. This cycle probably induces conformational changes in the client proteins, thereby causing their activation. Interacts dynamically with various co-chaperones that modulate its substrate recognition, ATPase cycle and chaperone function (By similarity).</text>
</comment>
<comment type="subunit">
    <text evidence="1">Homodimer.</text>
</comment>
<comment type="subcellular location">
    <subcellularLocation>
        <location>Cytoplasm</location>
    </subcellularLocation>
</comment>
<comment type="domain">
    <text evidence="1">The TPR repeat-binding motif mediates interaction with TPR repeat-containing proteins.</text>
</comment>
<comment type="similarity">
    <text evidence="3">Belongs to the heat shock protein 90 family.</text>
</comment>
<evidence type="ECO:0000250" key="1"/>
<evidence type="ECO:0000256" key="2">
    <source>
        <dbReference type="SAM" id="MobiDB-lite"/>
    </source>
</evidence>
<evidence type="ECO:0000305" key="3"/>
<feature type="chain" id="PRO_0000062945" description="Heat shock-like 85 kDa protein">
    <location>
        <begin position="1"/>
        <end position="704"/>
    </location>
</feature>
<feature type="region of interest" description="Disordered" evidence="2">
    <location>
        <begin position="212"/>
        <end position="251"/>
    </location>
</feature>
<feature type="region of interest" description="Disordered" evidence="2">
    <location>
        <begin position="675"/>
        <end position="704"/>
    </location>
</feature>
<feature type="short sequence motif" description="TPR repeat-binding">
    <location>
        <begin position="700"/>
        <end position="704"/>
    </location>
</feature>
<feature type="compositionally biased region" description="Basic and acidic residues" evidence="2">
    <location>
        <begin position="227"/>
        <end position="238"/>
    </location>
</feature>
<feature type="compositionally biased region" description="Acidic residues" evidence="2">
    <location>
        <begin position="675"/>
        <end position="684"/>
    </location>
</feature>
<feature type="compositionally biased region" description="Low complexity" evidence="2">
    <location>
        <begin position="685"/>
        <end position="695"/>
    </location>
</feature>
<feature type="binding site" evidence="1">
    <location>
        <position position="36"/>
    </location>
    <ligand>
        <name>ATP</name>
        <dbReference type="ChEBI" id="CHEBI:30616"/>
    </ligand>
</feature>
<feature type="binding site" evidence="1">
    <location>
        <position position="78"/>
    </location>
    <ligand>
        <name>ATP</name>
        <dbReference type="ChEBI" id="CHEBI:30616"/>
    </ligand>
</feature>
<feature type="binding site" evidence="1">
    <location>
        <position position="123"/>
    </location>
    <ligand>
        <name>ATP</name>
        <dbReference type="ChEBI" id="CHEBI:30616"/>
    </ligand>
</feature>
<feature type="binding site" evidence="1">
    <location>
        <position position="375"/>
    </location>
    <ligand>
        <name>ATP</name>
        <dbReference type="ChEBI" id="CHEBI:30616"/>
    </ligand>
</feature>
<sequence>MTETFAFQAEINQLMSLIINTFYSNKEIFLRELISNSSDACDKIRYQSLTNQAVLGDESHLRIRVVPDKANKTLTVEDTGIGMTKAELVNNLGTIARSGTKAFMEALEAGGDMSMIGQFGVGFYSAYLVADRVTVVSKNNDDEAYTWESSAGGTFTVTPTPDCDLKRGTRIVLHLKEDQQEYLEERRLKDLIKKHSEFIGYDIELMVEKATEKEVTDEDEDEAAATKNEEGEEPKVEEVKDDAEEGEKKKKTKKVKEVTQEFVVQNKHKPLWTRDPKDVTKEEYAAFYKAISNDWEEPLSTKHFSVEGQLEFRAILFVPKRAPFDMFEPSKKRNNIKLYVRRVFIMDNCEDLCPEWLAFVRGVVDSEDLPLNISRENLQQNKILKVIRKNIVKKALELFEEIAENKEDYKKFYEQFGKNVKLGIHEDSANRKKLMELLRFHSSESGEDMTTLKDYVTRMKEGQKCIYYVTGDSKKKLETSPFIEQARRRGFEVLFMTEPIDEYVMQQVKDFEDKKFACLTKEGVHFEETEEEKKQREEEKTAYERLCKAMKDVLGDKVEKVVVSERLATSPCILVTSEFGWSAHMEQIMRNQALRDSSMSAYMMSKKTMEINPAHPIVKELKRRVEADENDKAVKDLVYLLFDTALLTSGFTLDDPTSYAERIHRMIKLGLSLDDEDNGNEEAEPAAAVPAEPVAGTSSMEQVD</sequence>
<organism>
    <name type="scientific">Trypanosoma cruzi</name>
    <dbReference type="NCBI Taxonomy" id="5693"/>
    <lineage>
        <taxon>Eukaryota</taxon>
        <taxon>Discoba</taxon>
        <taxon>Euglenozoa</taxon>
        <taxon>Kinetoplastea</taxon>
        <taxon>Metakinetoplastina</taxon>
        <taxon>Trypanosomatida</taxon>
        <taxon>Trypanosomatidae</taxon>
        <taxon>Trypanosoma</taxon>
        <taxon>Schizotrypanum</taxon>
    </lineage>
</organism>
<reference key="1">
    <citation type="journal article" date="1987" name="Mol. Cell. Biol.">
        <title>The genome of Trypanosoma cruzi contains a constitutively expressed, tandemly arranged multicopy gene homologous to a major heat shock protein.</title>
        <authorList>
            <person name="Dragon E.A."/>
            <person name="Sias S.R."/>
            <person name="Kato E.A."/>
            <person name="Gabe J.D."/>
        </authorList>
    </citation>
    <scope>NUCLEOTIDE SEQUENCE [GENOMIC DNA]</scope>
    <source>
        <strain>Peru</strain>
    </source>
</reference>
<protein>
    <recommendedName>
        <fullName>Heat shock-like 85 kDa protein</fullName>
    </recommendedName>
</protein>
<name>HSP85_TRYCR</name>
<accession>P06660</accession>
<dbReference type="EMBL" id="M15346">
    <property type="protein sequence ID" value="AAA30202.1"/>
    <property type="molecule type" value="Genomic_DNA"/>
</dbReference>
<dbReference type="PIR" id="A26125">
    <property type="entry name" value="A26125"/>
</dbReference>
<dbReference type="SMR" id="P06660"/>
<dbReference type="VEuPathDB" id="TriTrypDB:BCY84_10987"/>
<dbReference type="VEuPathDB" id="TriTrypDB:C3747_60g185"/>
<dbReference type="VEuPathDB" id="TriTrypDB:C4B63_113g25"/>
<dbReference type="VEuPathDB" id="TriTrypDB:C4B63_113g29"/>
<dbReference type="VEuPathDB" id="TriTrypDB:C4B63_113g30"/>
<dbReference type="VEuPathDB" id="TriTrypDB:C4B63_84g87"/>
<dbReference type="VEuPathDB" id="TriTrypDB:C4B63_84g88"/>
<dbReference type="VEuPathDB" id="TriTrypDB:C4B63_84g89"/>
<dbReference type="VEuPathDB" id="TriTrypDB:ECC02_013471"/>
<dbReference type="VEuPathDB" id="TriTrypDB:Tc_MARK_3581"/>
<dbReference type="VEuPathDB" id="TriTrypDB:TcBrA4_0002250"/>
<dbReference type="VEuPathDB" id="TriTrypDB:TcBrA4_0002260"/>
<dbReference type="VEuPathDB" id="TriTrypDB:TcBrA4_0002270"/>
<dbReference type="VEuPathDB" id="TriTrypDB:TcBrA4_0002280"/>
<dbReference type="VEuPathDB" id="TriTrypDB:TcBrA4_0015160"/>
<dbReference type="VEuPathDB" id="TriTrypDB:TcBrA4_0015170"/>
<dbReference type="VEuPathDB" id="TriTrypDB:TcBrA4_0064950"/>
<dbReference type="VEuPathDB" id="TriTrypDB:TcBrA4_0064960"/>
<dbReference type="VEuPathDB" id="TriTrypDB:TcCL_NonESM02852"/>
<dbReference type="VEuPathDB" id="TriTrypDB:TcCLB.507713.30"/>
<dbReference type="VEuPathDB" id="TriTrypDB:TcCLB.509105.140"/>
<dbReference type="VEuPathDB" id="TriTrypDB:TCDM_06775"/>
<dbReference type="VEuPathDB" id="TriTrypDB:TcG_07416"/>
<dbReference type="VEuPathDB" id="TriTrypDB:TCSYLVIO_008621"/>
<dbReference type="VEuPathDB" id="TriTrypDB:TcYC6_0072610"/>
<dbReference type="OrthoDB" id="246893at2759"/>
<dbReference type="GO" id="GO:0005737">
    <property type="term" value="C:cytoplasm"/>
    <property type="evidence" value="ECO:0007669"/>
    <property type="project" value="UniProtKB-SubCell"/>
</dbReference>
<dbReference type="GO" id="GO:0005524">
    <property type="term" value="F:ATP binding"/>
    <property type="evidence" value="ECO:0007669"/>
    <property type="project" value="UniProtKB-KW"/>
</dbReference>
<dbReference type="GO" id="GO:0016887">
    <property type="term" value="F:ATP hydrolysis activity"/>
    <property type="evidence" value="ECO:0007669"/>
    <property type="project" value="InterPro"/>
</dbReference>
<dbReference type="GO" id="GO:0140662">
    <property type="term" value="F:ATP-dependent protein folding chaperone"/>
    <property type="evidence" value="ECO:0007669"/>
    <property type="project" value="InterPro"/>
</dbReference>
<dbReference type="GO" id="GO:0051082">
    <property type="term" value="F:unfolded protein binding"/>
    <property type="evidence" value="ECO:0007669"/>
    <property type="project" value="InterPro"/>
</dbReference>
<dbReference type="CDD" id="cd16927">
    <property type="entry name" value="HATPase_Hsp90-like"/>
    <property type="match status" value="1"/>
</dbReference>
<dbReference type="FunFam" id="1.20.120.790:FF:000001">
    <property type="entry name" value="Heat shock protein 90 alpha"/>
    <property type="match status" value="1"/>
</dbReference>
<dbReference type="FunFam" id="3.30.230.80:FF:000001">
    <property type="entry name" value="Heat shock protein 90 alpha"/>
    <property type="match status" value="1"/>
</dbReference>
<dbReference type="FunFam" id="3.40.50.11260:FF:000001">
    <property type="entry name" value="Heat shock protein 90 alpha"/>
    <property type="match status" value="1"/>
</dbReference>
<dbReference type="FunFam" id="3.30.565.10:FF:000001">
    <property type="entry name" value="Heat shock protein HSP 90-alpha"/>
    <property type="match status" value="1"/>
</dbReference>
<dbReference type="Gene3D" id="3.30.230.80">
    <property type="match status" value="1"/>
</dbReference>
<dbReference type="Gene3D" id="3.40.50.11260">
    <property type="match status" value="1"/>
</dbReference>
<dbReference type="Gene3D" id="1.20.120.790">
    <property type="entry name" value="Heat shock protein 90, C-terminal domain"/>
    <property type="match status" value="1"/>
</dbReference>
<dbReference type="Gene3D" id="3.30.565.10">
    <property type="entry name" value="Histidine kinase-like ATPase, C-terminal domain"/>
    <property type="match status" value="1"/>
</dbReference>
<dbReference type="HAMAP" id="MF_00505">
    <property type="entry name" value="HSP90"/>
    <property type="match status" value="1"/>
</dbReference>
<dbReference type="InterPro" id="IPR036890">
    <property type="entry name" value="HATPase_C_sf"/>
</dbReference>
<dbReference type="InterPro" id="IPR019805">
    <property type="entry name" value="Heat_shock_protein_90_CS"/>
</dbReference>
<dbReference type="InterPro" id="IPR037196">
    <property type="entry name" value="HSP90_C"/>
</dbReference>
<dbReference type="InterPro" id="IPR001404">
    <property type="entry name" value="Hsp90_fam"/>
</dbReference>
<dbReference type="InterPro" id="IPR020575">
    <property type="entry name" value="Hsp90_N"/>
</dbReference>
<dbReference type="InterPro" id="IPR020568">
    <property type="entry name" value="Ribosomal_Su5_D2-typ_SF"/>
</dbReference>
<dbReference type="NCBIfam" id="NF003555">
    <property type="entry name" value="PRK05218.1"/>
    <property type="match status" value="1"/>
</dbReference>
<dbReference type="PANTHER" id="PTHR11528">
    <property type="entry name" value="HEAT SHOCK PROTEIN 90 FAMILY MEMBER"/>
    <property type="match status" value="1"/>
</dbReference>
<dbReference type="Pfam" id="PF13589">
    <property type="entry name" value="HATPase_c_3"/>
    <property type="match status" value="1"/>
</dbReference>
<dbReference type="Pfam" id="PF00183">
    <property type="entry name" value="HSP90"/>
    <property type="match status" value="1"/>
</dbReference>
<dbReference type="PIRSF" id="PIRSF002583">
    <property type="entry name" value="Hsp90"/>
    <property type="match status" value="1"/>
</dbReference>
<dbReference type="PRINTS" id="PR00775">
    <property type="entry name" value="HEATSHOCK90"/>
</dbReference>
<dbReference type="SMART" id="SM00387">
    <property type="entry name" value="HATPase_c"/>
    <property type="match status" value="1"/>
</dbReference>
<dbReference type="SUPFAM" id="SSF55874">
    <property type="entry name" value="ATPase domain of HSP90 chaperone/DNA topoisomerase II/histidine kinase"/>
    <property type="match status" value="1"/>
</dbReference>
<dbReference type="SUPFAM" id="SSF110942">
    <property type="entry name" value="HSP90 C-terminal domain"/>
    <property type="match status" value="1"/>
</dbReference>
<dbReference type="SUPFAM" id="SSF54211">
    <property type="entry name" value="Ribosomal protein S5 domain 2-like"/>
    <property type="match status" value="1"/>
</dbReference>
<dbReference type="PROSITE" id="PS00298">
    <property type="entry name" value="HSP90"/>
    <property type="match status" value="1"/>
</dbReference>
<keyword id="KW-0067">ATP-binding</keyword>
<keyword id="KW-0143">Chaperone</keyword>
<keyword id="KW-0963">Cytoplasm</keyword>
<keyword id="KW-0547">Nucleotide-binding</keyword>
<keyword id="KW-0346">Stress response</keyword>
<proteinExistence type="inferred from homology"/>